<organism>
    <name type="scientific">Salmonella enteritidis PT4 (strain P125109)</name>
    <dbReference type="NCBI Taxonomy" id="550537"/>
    <lineage>
        <taxon>Bacteria</taxon>
        <taxon>Pseudomonadati</taxon>
        <taxon>Pseudomonadota</taxon>
        <taxon>Gammaproteobacteria</taxon>
        <taxon>Enterobacterales</taxon>
        <taxon>Enterobacteriaceae</taxon>
        <taxon>Salmonella</taxon>
    </lineage>
</organism>
<proteinExistence type="inferred from homology"/>
<name>ATPB_SALEP</name>
<keyword id="KW-0066">ATP synthesis</keyword>
<keyword id="KW-0067">ATP-binding</keyword>
<keyword id="KW-0997">Cell inner membrane</keyword>
<keyword id="KW-1003">Cell membrane</keyword>
<keyword id="KW-0139">CF(1)</keyword>
<keyword id="KW-0375">Hydrogen ion transport</keyword>
<keyword id="KW-0406">Ion transport</keyword>
<keyword id="KW-0472">Membrane</keyword>
<keyword id="KW-0547">Nucleotide-binding</keyword>
<keyword id="KW-1278">Translocase</keyword>
<keyword id="KW-0813">Transport</keyword>
<gene>
    <name evidence="1" type="primary">atpD</name>
    <name type="ordered locus">SEN3679</name>
</gene>
<sequence>MATGKIVQVIGAVVDVEFPQDAVPRVYDALEVQNGNEKLVLEVQQQLGGGIVRTIAMGSSDGLRRGLDVKDLEHPIEVPVGKATLGRIMNVLGEPVDMKGEIGEEERWAIHRAAPSYEELSNSQELLETGIKVIDLMCPFAKGGKVGLFGGAGVGKTVNMMELIRNIAIEHSGYSVFAGVGERTREGNDFYHEMTDSNVIDKVSLVYGQMNEPPGNRLRVALTGLTMAEKFRDEGRDVLLFVDNIYRYTLAGTEVSALLGRMPSAVGYQPTLAEEMGVLQERITSTKTGSITSVQAVYVPADDLTDPSPATTFAHLDATVVLSRQIASLGIYPAVDPLDSTSRQLDPLVVGQEHYDTARGVQSILQRYQELKDIIAILGMDELSEEDKLVVARARKIQRFLSQPFFVAEVFTGSPGKYVSLKDTIRGFKGIMEGEYDHLPEQAFYMVGSIDEAVEKAKKL</sequence>
<evidence type="ECO:0000255" key="1">
    <source>
        <dbReference type="HAMAP-Rule" id="MF_01347"/>
    </source>
</evidence>
<accession>B5QUS4</accession>
<comment type="function">
    <text evidence="1">Produces ATP from ADP in the presence of a proton gradient across the membrane. The catalytic sites are hosted primarily by the beta subunits.</text>
</comment>
<comment type="catalytic activity">
    <reaction evidence="1">
        <text>ATP + H2O + 4 H(+)(in) = ADP + phosphate + 5 H(+)(out)</text>
        <dbReference type="Rhea" id="RHEA:57720"/>
        <dbReference type="ChEBI" id="CHEBI:15377"/>
        <dbReference type="ChEBI" id="CHEBI:15378"/>
        <dbReference type="ChEBI" id="CHEBI:30616"/>
        <dbReference type="ChEBI" id="CHEBI:43474"/>
        <dbReference type="ChEBI" id="CHEBI:456216"/>
        <dbReference type="EC" id="7.1.2.2"/>
    </reaction>
</comment>
<comment type="subunit">
    <text evidence="1">F-type ATPases have 2 components, CF(1) - the catalytic core - and CF(0) - the membrane proton channel. CF(1) has five subunits: alpha(3), beta(3), gamma(1), delta(1), epsilon(1). CF(0) has three main subunits: a(1), b(2) and c(9-12). The alpha and beta chains form an alternating ring which encloses part of the gamma chain. CF(1) is attached to CF(0) by a central stalk formed by the gamma and epsilon chains, while a peripheral stalk is formed by the delta and b chains.</text>
</comment>
<comment type="subcellular location">
    <subcellularLocation>
        <location evidence="1">Cell inner membrane</location>
        <topology evidence="1">Peripheral membrane protein</topology>
    </subcellularLocation>
</comment>
<comment type="similarity">
    <text evidence="1">Belongs to the ATPase alpha/beta chains family.</text>
</comment>
<protein>
    <recommendedName>
        <fullName evidence="1">ATP synthase subunit beta</fullName>
        <ecNumber evidence="1">7.1.2.2</ecNumber>
    </recommendedName>
    <alternativeName>
        <fullName evidence="1">ATP synthase F1 sector subunit beta</fullName>
    </alternativeName>
    <alternativeName>
        <fullName evidence="1">F-ATPase subunit beta</fullName>
    </alternativeName>
</protein>
<reference key="1">
    <citation type="journal article" date="2008" name="Genome Res.">
        <title>Comparative genome analysis of Salmonella enteritidis PT4 and Salmonella gallinarum 287/91 provides insights into evolutionary and host adaptation pathways.</title>
        <authorList>
            <person name="Thomson N.R."/>
            <person name="Clayton D.J."/>
            <person name="Windhorst D."/>
            <person name="Vernikos G."/>
            <person name="Davidson S."/>
            <person name="Churcher C."/>
            <person name="Quail M.A."/>
            <person name="Stevens M."/>
            <person name="Jones M.A."/>
            <person name="Watson M."/>
            <person name="Barron A."/>
            <person name="Layton A."/>
            <person name="Pickard D."/>
            <person name="Kingsley R.A."/>
            <person name="Bignell A."/>
            <person name="Clark L."/>
            <person name="Harris B."/>
            <person name="Ormond D."/>
            <person name="Abdellah Z."/>
            <person name="Brooks K."/>
            <person name="Cherevach I."/>
            <person name="Chillingworth T."/>
            <person name="Woodward J."/>
            <person name="Norberczak H."/>
            <person name="Lord A."/>
            <person name="Arrowsmith C."/>
            <person name="Jagels K."/>
            <person name="Moule S."/>
            <person name="Mungall K."/>
            <person name="Saunders M."/>
            <person name="Whitehead S."/>
            <person name="Chabalgoity J.A."/>
            <person name="Maskell D."/>
            <person name="Humphreys T."/>
            <person name="Roberts M."/>
            <person name="Barrow P.A."/>
            <person name="Dougan G."/>
            <person name="Parkhill J."/>
        </authorList>
    </citation>
    <scope>NUCLEOTIDE SEQUENCE [LARGE SCALE GENOMIC DNA]</scope>
    <source>
        <strain>P125109</strain>
    </source>
</reference>
<dbReference type="EC" id="7.1.2.2" evidence="1"/>
<dbReference type="EMBL" id="AM933172">
    <property type="protein sequence ID" value="CAR35255.1"/>
    <property type="molecule type" value="Genomic_DNA"/>
</dbReference>
<dbReference type="RefSeq" id="WP_000190499.1">
    <property type="nucleotide sequence ID" value="NC_011294.1"/>
</dbReference>
<dbReference type="SMR" id="B5QUS4"/>
<dbReference type="GeneID" id="66758154"/>
<dbReference type="KEGG" id="set:SEN3679"/>
<dbReference type="HOGENOM" id="CLU_022398_0_2_6"/>
<dbReference type="Proteomes" id="UP000000613">
    <property type="component" value="Chromosome"/>
</dbReference>
<dbReference type="GO" id="GO:0005886">
    <property type="term" value="C:plasma membrane"/>
    <property type="evidence" value="ECO:0007669"/>
    <property type="project" value="UniProtKB-SubCell"/>
</dbReference>
<dbReference type="GO" id="GO:0045259">
    <property type="term" value="C:proton-transporting ATP synthase complex"/>
    <property type="evidence" value="ECO:0007669"/>
    <property type="project" value="UniProtKB-KW"/>
</dbReference>
<dbReference type="GO" id="GO:0005524">
    <property type="term" value="F:ATP binding"/>
    <property type="evidence" value="ECO:0007669"/>
    <property type="project" value="UniProtKB-UniRule"/>
</dbReference>
<dbReference type="GO" id="GO:0016887">
    <property type="term" value="F:ATP hydrolysis activity"/>
    <property type="evidence" value="ECO:0007669"/>
    <property type="project" value="InterPro"/>
</dbReference>
<dbReference type="GO" id="GO:0046933">
    <property type="term" value="F:proton-transporting ATP synthase activity, rotational mechanism"/>
    <property type="evidence" value="ECO:0007669"/>
    <property type="project" value="UniProtKB-UniRule"/>
</dbReference>
<dbReference type="CDD" id="cd18110">
    <property type="entry name" value="ATP-synt_F1_beta_C"/>
    <property type="match status" value="1"/>
</dbReference>
<dbReference type="CDD" id="cd18115">
    <property type="entry name" value="ATP-synt_F1_beta_N"/>
    <property type="match status" value="1"/>
</dbReference>
<dbReference type="CDD" id="cd01133">
    <property type="entry name" value="F1-ATPase_beta_CD"/>
    <property type="match status" value="1"/>
</dbReference>
<dbReference type="FunFam" id="1.10.1140.10:FF:000001">
    <property type="entry name" value="ATP synthase subunit beta"/>
    <property type="match status" value="1"/>
</dbReference>
<dbReference type="FunFam" id="2.40.10.170:FF:000003">
    <property type="entry name" value="ATP synthase subunit beta"/>
    <property type="match status" value="1"/>
</dbReference>
<dbReference type="FunFam" id="3.40.50.300:FF:000004">
    <property type="entry name" value="ATP synthase subunit beta"/>
    <property type="match status" value="1"/>
</dbReference>
<dbReference type="Gene3D" id="2.40.10.170">
    <property type="match status" value="1"/>
</dbReference>
<dbReference type="Gene3D" id="1.10.1140.10">
    <property type="entry name" value="Bovine Mitochondrial F1-atpase, Atp Synthase Beta Chain, Chain D, domain 3"/>
    <property type="match status" value="1"/>
</dbReference>
<dbReference type="Gene3D" id="3.40.50.300">
    <property type="entry name" value="P-loop containing nucleotide triphosphate hydrolases"/>
    <property type="match status" value="1"/>
</dbReference>
<dbReference type="HAMAP" id="MF_01347">
    <property type="entry name" value="ATP_synth_beta_bact"/>
    <property type="match status" value="1"/>
</dbReference>
<dbReference type="InterPro" id="IPR003593">
    <property type="entry name" value="AAA+_ATPase"/>
</dbReference>
<dbReference type="InterPro" id="IPR055190">
    <property type="entry name" value="ATP-synt_VA_C"/>
</dbReference>
<dbReference type="InterPro" id="IPR005722">
    <property type="entry name" value="ATP_synth_F1_bsu"/>
</dbReference>
<dbReference type="InterPro" id="IPR020003">
    <property type="entry name" value="ATPase_a/bsu_AS"/>
</dbReference>
<dbReference type="InterPro" id="IPR050053">
    <property type="entry name" value="ATPase_alpha/beta_chains"/>
</dbReference>
<dbReference type="InterPro" id="IPR004100">
    <property type="entry name" value="ATPase_F1/V1/A1_a/bsu_N"/>
</dbReference>
<dbReference type="InterPro" id="IPR036121">
    <property type="entry name" value="ATPase_F1/V1/A1_a/bsu_N_sf"/>
</dbReference>
<dbReference type="InterPro" id="IPR000194">
    <property type="entry name" value="ATPase_F1/V1/A1_a/bsu_nucl-bd"/>
</dbReference>
<dbReference type="InterPro" id="IPR024034">
    <property type="entry name" value="ATPase_F1/V1_b/a_C"/>
</dbReference>
<dbReference type="InterPro" id="IPR027417">
    <property type="entry name" value="P-loop_NTPase"/>
</dbReference>
<dbReference type="NCBIfam" id="TIGR01039">
    <property type="entry name" value="atpD"/>
    <property type="match status" value="1"/>
</dbReference>
<dbReference type="PANTHER" id="PTHR15184">
    <property type="entry name" value="ATP SYNTHASE"/>
    <property type="match status" value="1"/>
</dbReference>
<dbReference type="PANTHER" id="PTHR15184:SF71">
    <property type="entry name" value="ATP SYNTHASE SUBUNIT BETA, MITOCHONDRIAL"/>
    <property type="match status" value="1"/>
</dbReference>
<dbReference type="Pfam" id="PF00006">
    <property type="entry name" value="ATP-synt_ab"/>
    <property type="match status" value="1"/>
</dbReference>
<dbReference type="Pfam" id="PF02874">
    <property type="entry name" value="ATP-synt_ab_N"/>
    <property type="match status" value="1"/>
</dbReference>
<dbReference type="Pfam" id="PF22919">
    <property type="entry name" value="ATP-synt_VA_C"/>
    <property type="match status" value="1"/>
</dbReference>
<dbReference type="SMART" id="SM00382">
    <property type="entry name" value="AAA"/>
    <property type="match status" value="1"/>
</dbReference>
<dbReference type="SUPFAM" id="SSF47917">
    <property type="entry name" value="C-terminal domain of alpha and beta subunits of F1 ATP synthase"/>
    <property type="match status" value="1"/>
</dbReference>
<dbReference type="SUPFAM" id="SSF50615">
    <property type="entry name" value="N-terminal domain of alpha and beta subunits of F1 ATP synthase"/>
    <property type="match status" value="1"/>
</dbReference>
<dbReference type="SUPFAM" id="SSF52540">
    <property type="entry name" value="P-loop containing nucleoside triphosphate hydrolases"/>
    <property type="match status" value="1"/>
</dbReference>
<dbReference type="PROSITE" id="PS00152">
    <property type="entry name" value="ATPASE_ALPHA_BETA"/>
    <property type="match status" value="1"/>
</dbReference>
<feature type="chain" id="PRO_1000143539" description="ATP synthase subunit beta">
    <location>
        <begin position="1"/>
        <end position="460"/>
    </location>
</feature>
<feature type="binding site" evidence="1">
    <location>
        <begin position="150"/>
        <end position="157"/>
    </location>
    <ligand>
        <name>ATP</name>
        <dbReference type="ChEBI" id="CHEBI:30616"/>
    </ligand>
</feature>